<protein>
    <recommendedName>
        <fullName>Putative S-adenosyl-L-methionine-dependent methyltransferase MAB_3787</fullName>
        <ecNumber>2.1.1.-</ecNumber>
    </recommendedName>
</protein>
<comment type="function">
    <text evidence="1">Exhibits S-adenosyl-L-methionine-dependent methyltransferase activity.</text>
</comment>
<comment type="similarity">
    <text evidence="2">Belongs to the UPF0677 family.</text>
</comment>
<keyword id="KW-0489">Methyltransferase</keyword>
<keyword id="KW-1185">Reference proteome</keyword>
<keyword id="KW-0949">S-adenosyl-L-methionine</keyword>
<keyword id="KW-0808">Transferase</keyword>
<sequence length="305" mass="33220">MARTDDDSWDLASSVGATATMVAAQRALASHVPNPLINDPYAEPLVRAVGIEYFTKLASGAFDPEQMAGLVQLGITADGMANGMASRTWYYDTAFESSTAAGVRQAVILASGLDTRAYRLTWPAGTTVYELDQPEVITFKTDTLAELGASPSAERRTVAIDLREDWPAALQAAGFDPEQPTVWSAEGLLIYLPPEAQDRLFASITELSAPGSRLVCEQVPGLETADFSKARELTRQFAGETLDLDLESLVYTQERQMAADWLAEHGWTVITEENDELYARLNLDPPNPLLRSIFPNIVYVDATLG</sequence>
<accession>B1MGB7</accession>
<gene>
    <name type="ordered locus">MAB_3787</name>
</gene>
<evidence type="ECO:0000250" key="1"/>
<evidence type="ECO:0000305" key="2"/>
<name>Y3787_MYCA9</name>
<reference key="1">
    <citation type="journal article" date="2009" name="PLoS ONE">
        <title>Non mycobacterial virulence genes in the genome of the emerging pathogen Mycobacterium abscessus.</title>
        <authorList>
            <person name="Ripoll F."/>
            <person name="Pasek S."/>
            <person name="Schenowitz C."/>
            <person name="Dossat C."/>
            <person name="Barbe V."/>
            <person name="Rottman M."/>
            <person name="Macheras E."/>
            <person name="Heym B."/>
            <person name="Herrmann J.L."/>
            <person name="Daffe M."/>
            <person name="Brosch R."/>
            <person name="Risler J.L."/>
            <person name="Gaillard J.L."/>
        </authorList>
    </citation>
    <scope>NUCLEOTIDE SEQUENCE [LARGE SCALE GENOMIC DNA]</scope>
    <source>
        <strain>ATCC 19977 / DSM 44196 / CCUG 20993 / CIP 104536 / JCM 13569 / NCTC 13031 / TMC 1543 / L948</strain>
    </source>
</reference>
<organism>
    <name type="scientific">Mycobacteroides abscessus (strain ATCC 19977 / DSM 44196 / CCUG 20993 / CIP 104536 / JCM 13569 / NCTC 13031 / TMC 1543 / L948)</name>
    <name type="common">Mycobacterium abscessus</name>
    <dbReference type="NCBI Taxonomy" id="561007"/>
    <lineage>
        <taxon>Bacteria</taxon>
        <taxon>Bacillati</taxon>
        <taxon>Actinomycetota</taxon>
        <taxon>Actinomycetes</taxon>
        <taxon>Mycobacteriales</taxon>
        <taxon>Mycobacteriaceae</taxon>
        <taxon>Mycobacteroides</taxon>
        <taxon>Mycobacteroides abscessus</taxon>
    </lineage>
</organism>
<feature type="chain" id="PRO_0000361121" description="Putative S-adenosyl-L-methionine-dependent methyltransferase MAB_3787">
    <location>
        <begin position="1"/>
        <end position="305"/>
    </location>
</feature>
<feature type="binding site" evidence="1">
    <location>
        <position position="132"/>
    </location>
    <ligand>
        <name>S-adenosyl-L-methionine</name>
        <dbReference type="ChEBI" id="CHEBI:59789"/>
    </ligand>
</feature>
<feature type="binding site" evidence="1">
    <location>
        <begin position="161"/>
        <end position="162"/>
    </location>
    <ligand>
        <name>S-adenosyl-L-methionine</name>
        <dbReference type="ChEBI" id="CHEBI:59789"/>
    </ligand>
</feature>
<proteinExistence type="inferred from homology"/>
<dbReference type="EC" id="2.1.1.-"/>
<dbReference type="EMBL" id="CU458896">
    <property type="protein sequence ID" value="CAM63862.1"/>
    <property type="molecule type" value="Genomic_DNA"/>
</dbReference>
<dbReference type="RefSeq" id="WP_005080522.1">
    <property type="nucleotide sequence ID" value="NZ_MLCG01000001.1"/>
</dbReference>
<dbReference type="SMR" id="B1MGB7"/>
<dbReference type="GeneID" id="93380727"/>
<dbReference type="KEGG" id="mab:MAB_3787"/>
<dbReference type="Proteomes" id="UP000007137">
    <property type="component" value="Chromosome"/>
</dbReference>
<dbReference type="GO" id="GO:0008168">
    <property type="term" value="F:methyltransferase activity"/>
    <property type="evidence" value="ECO:0007669"/>
    <property type="project" value="UniProtKB-KW"/>
</dbReference>
<dbReference type="GO" id="GO:0032259">
    <property type="term" value="P:methylation"/>
    <property type="evidence" value="ECO:0007669"/>
    <property type="project" value="UniProtKB-KW"/>
</dbReference>
<dbReference type="FunFam" id="3.40.50.150:FF:000152">
    <property type="entry name" value="S-adenosyl-L-methionine-dependent methyltransferase"/>
    <property type="match status" value="1"/>
</dbReference>
<dbReference type="Gene3D" id="3.40.50.150">
    <property type="entry name" value="Vaccinia Virus protein VP39"/>
    <property type="match status" value="1"/>
</dbReference>
<dbReference type="InterPro" id="IPR007213">
    <property type="entry name" value="Ppm1/Ppm2/Tcmp"/>
</dbReference>
<dbReference type="InterPro" id="IPR029063">
    <property type="entry name" value="SAM-dependent_MTases_sf"/>
</dbReference>
<dbReference type="InterPro" id="IPR011610">
    <property type="entry name" value="SAM_mthyl_Trfase_ML2640-like"/>
</dbReference>
<dbReference type="NCBIfam" id="TIGR00027">
    <property type="entry name" value="mthyl_TIGR00027"/>
    <property type="match status" value="1"/>
</dbReference>
<dbReference type="PANTHER" id="PTHR43619">
    <property type="entry name" value="S-ADENOSYL-L-METHIONINE-DEPENDENT METHYLTRANSFERASE YKTD-RELATED"/>
    <property type="match status" value="1"/>
</dbReference>
<dbReference type="PANTHER" id="PTHR43619:SF2">
    <property type="entry name" value="S-ADENOSYL-L-METHIONINE-DEPENDENT METHYLTRANSFERASES SUPERFAMILY PROTEIN"/>
    <property type="match status" value="1"/>
</dbReference>
<dbReference type="Pfam" id="PF04072">
    <property type="entry name" value="LCM"/>
    <property type="match status" value="1"/>
</dbReference>
<dbReference type="SUPFAM" id="SSF53335">
    <property type="entry name" value="S-adenosyl-L-methionine-dependent methyltransferases"/>
    <property type="match status" value="1"/>
</dbReference>